<name>GTR1_BOVIN</name>
<evidence type="ECO:0000250" key="1">
    <source>
        <dbReference type="UniProtKB" id="P11166"/>
    </source>
</evidence>
<evidence type="ECO:0000250" key="2">
    <source>
        <dbReference type="UniProtKB" id="P11167"/>
    </source>
</evidence>
<evidence type="ECO:0000250" key="3">
    <source>
        <dbReference type="UniProtKB" id="P11169"/>
    </source>
</evidence>
<evidence type="ECO:0000250" key="4">
    <source>
        <dbReference type="UniProtKB" id="P17809"/>
    </source>
</evidence>
<evidence type="ECO:0000250" key="5">
    <source>
        <dbReference type="UniProtKB" id="P46896"/>
    </source>
</evidence>
<evidence type="ECO:0000255" key="6"/>
<evidence type="ECO:0000256" key="7">
    <source>
        <dbReference type="SAM" id="MobiDB-lite"/>
    </source>
</evidence>
<evidence type="ECO:0000269" key="8">
    <source>
    </source>
</evidence>
<evidence type="ECO:0000305" key="9"/>
<organism>
    <name type="scientific">Bos taurus</name>
    <name type="common">Bovine</name>
    <dbReference type="NCBI Taxonomy" id="9913"/>
    <lineage>
        <taxon>Eukaryota</taxon>
        <taxon>Metazoa</taxon>
        <taxon>Chordata</taxon>
        <taxon>Craniata</taxon>
        <taxon>Vertebrata</taxon>
        <taxon>Euteleostomi</taxon>
        <taxon>Mammalia</taxon>
        <taxon>Eutheria</taxon>
        <taxon>Laurasiatheria</taxon>
        <taxon>Artiodactyla</taxon>
        <taxon>Ruminantia</taxon>
        <taxon>Pecora</taxon>
        <taxon>Bovidae</taxon>
        <taxon>Bovinae</taxon>
        <taxon>Bos</taxon>
    </lineage>
</organism>
<accession>P27674</accession>
<accession>A1L519</accession>
<accession>Q0VCX8</accession>
<feature type="chain" id="PRO_0000050337" description="Solute carrier family 2, facilitated glucose transporter member 1">
    <location>
        <begin position="1"/>
        <end position="492"/>
    </location>
</feature>
<feature type="topological domain" description="Cytoplasmic" evidence="1">
    <location>
        <begin position="1"/>
        <end position="11"/>
    </location>
</feature>
<feature type="transmembrane region" description="Helical; Name=1" evidence="1">
    <location>
        <begin position="12"/>
        <end position="33"/>
    </location>
</feature>
<feature type="topological domain" description="Extracellular" evidence="1">
    <location>
        <begin position="34"/>
        <end position="66"/>
    </location>
</feature>
<feature type="transmembrane region" description="Helical; Name=2" evidence="1">
    <location>
        <begin position="67"/>
        <end position="87"/>
    </location>
</feature>
<feature type="topological domain" description="Cytoplasmic" evidence="1">
    <location>
        <begin position="88"/>
        <end position="90"/>
    </location>
</feature>
<feature type="transmembrane region" description="Helical; Name=3" evidence="1">
    <location>
        <begin position="91"/>
        <end position="112"/>
    </location>
</feature>
<feature type="topological domain" description="Extracellular" evidence="1">
    <location>
        <begin position="113"/>
        <end position="120"/>
    </location>
</feature>
<feature type="transmembrane region" description="Helical; Name=4" evidence="1">
    <location>
        <begin position="121"/>
        <end position="144"/>
    </location>
</feature>
<feature type="topological domain" description="Cytoplasmic" evidence="1">
    <location>
        <begin position="145"/>
        <end position="155"/>
    </location>
</feature>
<feature type="transmembrane region" description="Helical; Name=5" evidence="1">
    <location>
        <begin position="156"/>
        <end position="176"/>
    </location>
</feature>
<feature type="topological domain" description="Extracellular" evidence="1">
    <location>
        <begin position="177"/>
        <end position="185"/>
    </location>
</feature>
<feature type="transmembrane region" description="Helical; Name=6" evidence="1">
    <location>
        <begin position="186"/>
        <end position="206"/>
    </location>
</feature>
<feature type="topological domain" description="Cytoplasmic" evidence="1">
    <location>
        <begin position="207"/>
        <end position="271"/>
    </location>
</feature>
<feature type="transmembrane region" description="Helical; Name=7" evidence="1">
    <location>
        <begin position="272"/>
        <end position="293"/>
    </location>
</feature>
<feature type="topological domain" description="Extracellular" evidence="1">
    <location>
        <begin position="294"/>
        <end position="306"/>
    </location>
</feature>
<feature type="transmembrane region" description="Helical; Name=8" evidence="1">
    <location>
        <begin position="307"/>
        <end position="328"/>
    </location>
</feature>
<feature type="topological domain" description="Cytoplasmic" evidence="1">
    <location>
        <begin position="329"/>
        <end position="334"/>
    </location>
</feature>
<feature type="transmembrane region" description="Helical; Name=9" evidence="1">
    <location>
        <begin position="335"/>
        <end position="355"/>
    </location>
</feature>
<feature type="topological domain" description="Extracellular" evidence="1">
    <location>
        <begin position="356"/>
        <end position="365"/>
    </location>
</feature>
<feature type="transmembrane region" description="Helical; Name=10" evidence="1">
    <location>
        <begin position="366"/>
        <end position="388"/>
    </location>
</feature>
<feature type="topological domain" description="Cytoplasmic" evidence="1">
    <location>
        <begin position="389"/>
        <end position="401"/>
    </location>
</feature>
<feature type="transmembrane region" description="Helical; Name=11" evidence="1">
    <location>
        <begin position="402"/>
        <end position="422"/>
    </location>
</feature>
<feature type="topological domain" description="Extracellular" evidence="1">
    <location>
        <begin position="423"/>
        <end position="429"/>
    </location>
</feature>
<feature type="transmembrane region" description="Helical; Name=12" evidence="1">
    <location>
        <begin position="430"/>
        <end position="450"/>
    </location>
</feature>
<feature type="topological domain" description="Cytoplasmic" evidence="1">
    <location>
        <begin position="451"/>
        <end position="492"/>
    </location>
</feature>
<feature type="region of interest" description="Disordered" evidence="7">
    <location>
        <begin position="468"/>
        <end position="492"/>
    </location>
</feature>
<feature type="binding site" evidence="3">
    <location>
        <position position="161"/>
    </location>
    <ligand>
        <name>D-glucose</name>
        <dbReference type="ChEBI" id="CHEBI:4167"/>
    </ligand>
</feature>
<feature type="binding site" evidence="3">
    <location>
        <begin position="282"/>
        <end position="283"/>
    </location>
    <ligand>
        <name>D-glucose</name>
        <dbReference type="ChEBI" id="CHEBI:4167"/>
    </ligand>
</feature>
<feature type="binding site" evidence="3">
    <location>
        <position position="288"/>
    </location>
    <ligand>
        <name>D-glucose</name>
        <dbReference type="ChEBI" id="CHEBI:4167"/>
    </ligand>
</feature>
<feature type="binding site" evidence="3">
    <location>
        <position position="317"/>
    </location>
    <ligand>
        <name>D-glucose</name>
        <dbReference type="ChEBI" id="CHEBI:4167"/>
    </ligand>
</feature>
<feature type="binding site" evidence="3">
    <location>
        <position position="380"/>
    </location>
    <ligand>
        <name>D-glucose</name>
        <dbReference type="ChEBI" id="CHEBI:4167"/>
    </ligand>
</feature>
<feature type="binding site" evidence="3">
    <location>
        <position position="388"/>
    </location>
    <ligand>
        <name>D-glucose</name>
        <dbReference type="ChEBI" id="CHEBI:4167"/>
    </ligand>
</feature>
<feature type="modified residue" description="N-acetylmethionine" evidence="1">
    <location>
        <position position="1"/>
    </location>
</feature>
<feature type="modified residue" description="Phosphoserine" evidence="1">
    <location>
        <position position="226"/>
    </location>
</feature>
<feature type="modified residue" description="Phosphoserine" evidence="1">
    <location>
        <position position="465"/>
    </location>
</feature>
<feature type="modified residue" description="Phosphothreonine" evidence="1">
    <location>
        <position position="478"/>
    </location>
</feature>
<feature type="modified residue" description="Phosphoserine" evidence="1">
    <location>
        <position position="490"/>
    </location>
</feature>
<feature type="glycosylation site" description="N-linked (GlcNAc...) asparagine" evidence="6">
    <location>
        <position position="45"/>
    </location>
</feature>
<feature type="sequence conflict" description="In Ref. 2; ABM06073." evidence="9" ref="2">
    <original>Q</original>
    <variation>P</variation>
    <location>
        <position position="172"/>
    </location>
</feature>
<gene>
    <name evidence="1" type="primary">SLC2A1</name>
    <name evidence="1" type="synonym">GLUT1</name>
</gene>
<dbReference type="EMBL" id="M60448">
    <property type="protein sequence ID" value="AAA30550.1"/>
    <property type="molecule type" value="mRNA"/>
</dbReference>
<dbReference type="EMBL" id="BT029806">
    <property type="protein sequence ID" value="ABM06073.1"/>
    <property type="molecule type" value="mRNA"/>
</dbReference>
<dbReference type="EMBL" id="BC119940">
    <property type="protein sequence ID" value="AAI19941.1"/>
    <property type="molecule type" value="mRNA"/>
</dbReference>
<dbReference type="PIR" id="I45902">
    <property type="entry name" value="I45902"/>
</dbReference>
<dbReference type="RefSeq" id="NP_777027.1">
    <property type="nucleotide sequence ID" value="NM_174602.2"/>
</dbReference>
<dbReference type="SMR" id="P27674"/>
<dbReference type="BioGRID" id="159617">
    <property type="interactions" value="1"/>
</dbReference>
<dbReference type="FunCoup" id="P27674">
    <property type="interactions" value="805"/>
</dbReference>
<dbReference type="STRING" id="9913.ENSBTAP00000040563"/>
<dbReference type="GlyCosmos" id="P27674">
    <property type="glycosylation" value="1 site, No reported glycans"/>
</dbReference>
<dbReference type="GlyGen" id="P27674">
    <property type="glycosylation" value="1 site"/>
</dbReference>
<dbReference type="PaxDb" id="9913-ENSBTAP00000040563"/>
<dbReference type="Ensembl" id="ENSBTAT00000042960.3">
    <property type="protein sequence ID" value="ENSBTAP00000040563.1"/>
    <property type="gene ID" value="ENSBTAG00000009617.7"/>
</dbReference>
<dbReference type="GeneID" id="282356"/>
<dbReference type="KEGG" id="bta:282356"/>
<dbReference type="CTD" id="6513"/>
<dbReference type="VEuPathDB" id="HostDB:ENSBTAG00000009617"/>
<dbReference type="VGNC" id="VGNC:34796">
    <property type="gene designation" value="SLC2A1"/>
</dbReference>
<dbReference type="eggNOG" id="KOG0569">
    <property type="taxonomic scope" value="Eukaryota"/>
</dbReference>
<dbReference type="GeneTree" id="ENSGT00940000156792"/>
<dbReference type="HOGENOM" id="CLU_001265_30_5_1"/>
<dbReference type="InParanoid" id="P27674"/>
<dbReference type="OMA" id="WAITASF"/>
<dbReference type="OrthoDB" id="4540492at2759"/>
<dbReference type="TreeFam" id="TF313762"/>
<dbReference type="Reactome" id="R-BTA-189200">
    <property type="pathway name" value="Cellular hexose transport"/>
</dbReference>
<dbReference type="Reactome" id="R-BTA-196836">
    <property type="pathway name" value="Vitamin C (ascorbate) metabolism"/>
</dbReference>
<dbReference type="Reactome" id="R-BTA-422356">
    <property type="pathway name" value="Regulation of insulin secretion"/>
</dbReference>
<dbReference type="Reactome" id="R-BTA-5653890">
    <property type="pathway name" value="Lactose synthesis"/>
</dbReference>
<dbReference type="Proteomes" id="UP000009136">
    <property type="component" value="Chromosome 3"/>
</dbReference>
<dbReference type="Bgee" id="ENSBTAG00000009617">
    <property type="expression patterns" value="Expressed in pigment epithelium of eye and 106 other cell types or tissues"/>
</dbReference>
<dbReference type="GO" id="GO:0016324">
    <property type="term" value="C:apical plasma membrane"/>
    <property type="evidence" value="ECO:0000318"/>
    <property type="project" value="GO_Central"/>
</dbReference>
<dbReference type="GO" id="GO:0016323">
    <property type="term" value="C:basolateral plasma membrane"/>
    <property type="evidence" value="ECO:0000318"/>
    <property type="project" value="GO_Central"/>
</dbReference>
<dbReference type="GO" id="GO:0030864">
    <property type="term" value="C:cortical actin cytoskeleton"/>
    <property type="evidence" value="ECO:0000250"/>
    <property type="project" value="UniProtKB"/>
</dbReference>
<dbReference type="GO" id="GO:0005829">
    <property type="term" value="C:cytosol"/>
    <property type="evidence" value="ECO:0007669"/>
    <property type="project" value="Ensembl"/>
</dbReference>
<dbReference type="GO" id="GO:0001674">
    <property type="term" value="C:female germ cell nucleus"/>
    <property type="evidence" value="ECO:0007669"/>
    <property type="project" value="Ensembl"/>
</dbReference>
<dbReference type="GO" id="GO:0001939">
    <property type="term" value="C:female pronucleus"/>
    <property type="evidence" value="ECO:0007669"/>
    <property type="project" value="Ensembl"/>
</dbReference>
<dbReference type="GO" id="GO:1990350">
    <property type="term" value="C:glucose transporter complex"/>
    <property type="evidence" value="ECO:0007669"/>
    <property type="project" value="Ensembl"/>
</dbReference>
<dbReference type="GO" id="GO:0000139">
    <property type="term" value="C:Golgi membrane"/>
    <property type="evidence" value="ECO:0007669"/>
    <property type="project" value="Ensembl"/>
</dbReference>
<dbReference type="GO" id="GO:0045121">
    <property type="term" value="C:membrane raft"/>
    <property type="evidence" value="ECO:0007669"/>
    <property type="project" value="Ensembl"/>
</dbReference>
<dbReference type="GO" id="GO:0030496">
    <property type="term" value="C:midbody"/>
    <property type="evidence" value="ECO:0007669"/>
    <property type="project" value="Ensembl"/>
</dbReference>
<dbReference type="GO" id="GO:0001917">
    <property type="term" value="C:photoreceptor inner segment"/>
    <property type="evidence" value="ECO:0007669"/>
    <property type="project" value="UniProtKB-SubCell"/>
</dbReference>
<dbReference type="GO" id="GO:0005886">
    <property type="term" value="C:plasma membrane"/>
    <property type="evidence" value="ECO:0000250"/>
    <property type="project" value="UniProtKB"/>
</dbReference>
<dbReference type="GO" id="GO:0098793">
    <property type="term" value="C:presynapse"/>
    <property type="evidence" value="ECO:0007669"/>
    <property type="project" value="Ensembl"/>
</dbReference>
<dbReference type="GO" id="GO:0031982">
    <property type="term" value="C:vesicle"/>
    <property type="evidence" value="ECO:0007669"/>
    <property type="project" value="Ensembl"/>
</dbReference>
<dbReference type="GO" id="GO:0055056">
    <property type="term" value="F:D-glucose transmembrane transporter activity"/>
    <property type="evidence" value="ECO:0000250"/>
    <property type="project" value="UniProtKB"/>
</dbReference>
<dbReference type="GO" id="GO:0033300">
    <property type="term" value="F:dehydroascorbic acid transmembrane transporter activity"/>
    <property type="evidence" value="ECO:0007669"/>
    <property type="project" value="Ensembl"/>
</dbReference>
<dbReference type="GO" id="GO:0015150">
    <property type="term" value="F:fucose transmembrane transporter activity"/>
    <property type="evidence" value="ECO:0007669"/>
    <property type="project" value="Ensembl"/>
</dbReference>
<dbReference type="GO" id="GO:0042802">
    <property type="term" value="F:identical protein binding"/>
    <property type="evidence" value="ECO:0007669"/>
    <property type="project" value="Ensembl"/>
</dbReference>
<dbReference type="GO" id="GO:0005324">
    <property type="term" value="F:long-chain fatty acid transmembrane transporter activity"/>
    <property type="evidence" value="ECO:0007669"/>
    <property type="project" value="Ensembl"/>
</dbReference>
<dbReference type="GO" id="GO:0042149">
    <property type="term" value="P:cellular response to glucose starvation"/>
    <property type="evidence" value="ECO:0007669"/>
    <property type="project" value="Ensembl"/>
</dbReference>
<dbReference type="GO" id="GO:0007417">
    <property type="term" value="P:central nervous system development"/>
    <property type="evidence" value="ECO:0007669"/>
    <property type="project" value="Ensembl"/>
</dbReference>
<dbReference type="GO" id="GO:0046323">
    <property type="term" value="P:D-glucose import"/>
    <property type="evidence" value="ECO:0000318"/>
    <property type="project" value="GO_Central"/>
</dbReference>
<dbReference type="GO" id="GO:0098708">
    <property type="term" value="P:D-glucose import across plasma membrane"/>
    <property type="evidence" value="ECO:0007669"/>
    <property type="project" value="Ensembl"/>
</dbReference>
<dbReference type="GO" id="GO:1904659">
    <property type="term" value="P:D-glucose transmembrane transport"/>
    <property type="evidence" value="ECO:0000250"/>
    <property type="project" value="UniProtKB"/>
</dbReference>
<dbReference type="GO" id="GO:0070837">
    <property type="term" value="P:dehydroascorbic acid transport"/>
    <property type="evidence" value="ECO:0000318"/>
    <property type="project" value="GO_Central"/>
</dbReference>
<dbReference type="GO" id="GO:0015911">
    <property type="term" value="P:long-chain fatty acid import across plasma membrane"/>
    <property type="evidence" value="ECO:0007669"/>
    <property type="project" value="Ensembl"/>
</dbReference>
<dbReference type="GO" id="GO:0045494">
    <property type="term" value="P:photoreceptor cell maintenance"/>
    <property type="evidence" value="ECO:0000250"/>
    <property type="project" value="UniProtKB"/>
</dbReference>
<dbReference type="GO" id="GO:0065003">
    <property type="term" value="P:protein-containing complex assembly"/>
    <property type="evidence" value="ECO:0000250"/>
    <property type="project" value="UniProtKB"/>
</dbReference>
<dbReference type="GO" id="GO:0032868">
    <property type="term" value="P:response to insulin"/>
    <property type="evidence" value="ECO:0000318"/>
    <property type="project" value="GO_Central"/>
</dbReference>
<dbReference type="GO" id="GO:0150104">
    <property type="term" value="P:transport across blood-brain barrier"/>
    <property type="evidence" value="ECO:0007669"/>
    <property type="project" value="Ensembl"/>
</dbReference>
<dbReference type="CDD" id="cd17431">
    <property type="entry name" value="MFS_GLUT_Class1"/>
    <property type="match status" value="1"/>
</dbReference>
<dbReference type="FunFam" id="1.20.1250.20:FF:000040">
    <property type="entry name" value="Solute carrier family 2, facilitated glucose transporter member 1"/>
    <property type="match status" value="1"/>
</dbReference>
<dbReference type="Gene3D" id="1.20.1250.20">
    <property type="entry name" value="MFS general substrate transporter like domains"/>
    <property type="match status" value="1"/>
</dbReference>
<dbReference type="InterPro" id="IPR002439">
    <property type="entry name" value="Glu_transpt_1"/>
</dbReference>
<dbReference type="InterPro" id="IPR045263">
    <property type="entry name" value="GLUT"/>
</dbReference>
<dbReference type="InterPro" id="IPR020846">
    <property type="entry name" value="MFS_dom"/>
</dbReference>
<dbReference type="InterPro" id="IPR005828">
    <property type="entry name" value="MFS_sugar_transport-like"/>
</dbReference>
<dbReference type="InterPro" id="IPR036259">
    <property type="entry name" value="MFS_trans_sf"/>
</dbReference>
<dbReference type="InterPro" id="IPR003663">
    <property type="entry name" value="Sugar/inositol_transpt"/>
</dbReference>
<dbReference type="InterPro" id="IPR005829">
    <property type="entry name" value="Sugar_transporter_CS"/>
</dbReference>
<dbReference type="NCBIfam" id="TIGR00879">
    <property type="entry name" value="SP"/>
    <property type="match status" value="1"/>
</dbReference>
<dbReference type="PANTHER" id="PTHR23503">
    <property type="entry name" value="SOLUTE CARRIER FAMILY 2"/>
    <property type="match status" value="1"/>
</dbReference>
<dbReference type="PANTHER" id="PTHR23503:SF51">
    <property type="entry name" value="SOLUTE CARRIER FAMILY 2, FACILITATED GLUCOSE TRANSPORTER MEMBER 1"/>
    <property type="match status" value="1"/>
</dbReference>
<dbReference type="Pfam" id="PF00083">
    <property type="entry name" value="Sugar_tr"/>
    <property type="match status" value="1"/>
</dbReference>
<dbReference type="PRINTS" id="PR01190">
    <property type="entry name" value="GLUCTRSPORT1"/>
</dbReference>
<dbReference type="PRINTS" id="PR00171">
    <property type="entry name" value="SUGRTRNSPORT"/>
</dbReference>
<dbReference type="SUPFAM" id="SSF103473">
    <property type="entry name" value="MFS general substrate transporter"/>
    <property type="match status" value="1"/>
</dbReference>
<dbReference type="PROSITE" id="PS50850">
    <property type="entry name" value="MFS"/>
    <property type="match status" value="1"/>
</dbReference>
<dbReference type="PROSITE" id="PS00216">
    <property type="entry name" value="SUGAR_TRANSPORT_1"/>
    <property type="match status" value="1"/>
</dbReference>
<dbReference type="PROSITE" id="PS00217">
    <property type="entry name" value="SUGAR_TRANSPORT_2"/>
    <property type="match status" value="1"/>
</dbReference>
<reference key="1">
    <citation type="journal article" date="1990" name="Mol. Cell. Neurosci.">
        <title>Molecular cloning of the bovine blood-brain barrier glucose transporter cDNA and demonstration of phylogenetic conservation of the 5'-untranslated region.</title>
        <authorList>
            <person name="Boado R.J."/>
            <person name="Pardridge W.M."/>
        </authorList>
    </citation>
    <scope>NUCLEOTIDE SEQUENCE [MRNA]</scope>
    <scope>TISSUE SPECIFICITY</scope>
    <source>
        <tissue>Brain capillary</tissue>
    </source>
</reference>
<reference key="2">
    <citation type="journal article" date="2005" name="BMC Genomics">
        <title>Characterization of 954 bovine full-CDS cDNA sequences.</title>
        <authorList>
            <person name="Harhay G.P."/>
            <person name="Sonstegard T.S."/>
            <person name="Keele J.W."/>
            <person name="Heaton M.P."/>
            <person name="Clawson M.L."/>
            <person name="Snelling W.M."/>
            <person name="Wiedmann R.T."/>
            <person name="Van Tassell C.P."/>
            <person name="Smith T.P.L."/>
        </authorList>
    </citation>
    <scope>NUCLEOTIDE SEQUENCE [LARGE SCALE MRNA]</scope>
</reference>
<reference key="3">
    <citation type="submission" date="2006-08" db="EMBL/GenBank/DDBJ databases">
        <authorList>
            <consortium name="NIH - Mammalian Gene Collection (MGC) project"/>
        </authorList>
    </citation>
    <scope>NUCLEOTIDE SEQUENCE [LARGE SCALE MRNA]</scope>
    <source>
        <strain>Hereford</strain>
        <tissue>Basal ganglia</tissue>
    </source>
</reference>
<proteinExistence type="evidence at protein level"/>
<comment type="function">
    <text evidence="1 4 5">Facilitative glucose transporter, which is responsible for constitutive or basal glucose uptake. Has a very broad substrate specificity; can transport a wide range of aldoses including both pentoses and hexoses. Most important energy carrier of the brain: present at the blood-brain barrier and assures the energy-independent, facilitative transport of glucose into the brain (By similarity). In association with BSG and NXNL1, promotes retinal cone survival by increasing glucose uptake into photoreceptors (By similarity). Required for mesendoderm differentiation (By similarity).</text>
</comment>
<comment type="catalytic activity">
    <reaction evidence="1">
        <text>D-glucose(out) = D-glucose(in)</text>
        <dbReference type="Rhea" id="RHEA:60376"/>
        <dbReference type="ChEBI" id="CHEBI:4167"/>
    </reaction>
</comment>
<comment type="activity regulation">
    <text evidence="1">The uptake of glucose is inhibited by cytochalasin B. Glucose uptake is increased in response to phorbol ester 12-O-tetradecanoylphorbol-13-acetate (TPA) treatment: TPA-induced glucose uptake requires phosphorylation at Ser-226.</text>
</comment>
<comment type="subunit">
    <text evidence="1 2 4">Found in a complex with ADD2, DMTN and SLC2A1. Interacts (via C-terminus cytoplasmic region) with DMTN. Interacts with SNX27; the interaction is required when endocytosed to prevent degradation in lysosomes and promote recycling to the plasma membrane. Interacts with GIPC (via PDZ domain). Interacts with STOM. Interacts with SGTA (via Gln-rich region) (By similarity). Interacts with BSG (By similarity). Interacts with SMIM43; the interaction may promote SLC2A1-mediated glucose transport to meet the energy needs of mesendoderm differentiation (By similarity).</text>
</comment>
<comment type="subcellular location">
    <subcellularLocation>
        <location evidence="1">Cell membrane</location>
        <topology evidence="6">Multi-pass membrane protein</topology>
    </subcellularLocation>
    <subcellularLocation>
        <location evidence="4">Photoreceptor inner segment</location>
    </subcellularLocation>
</comment>
<comment type="tissue specificity">
    <text evidence="8">Detected in brain capillary (at protein level). Detected in brain capillary.</text>
</comment>
<comment type="PTM">
    <text evidence="1">Phosphorylation at Ser-226 by PKC promotes glucose uptake by increasing cell membrane localization.</text>
</comment>
<comment type="similarity">
    <text evidence="9">Belongs to the major facilitator superfamily. Sugar transporter (TC 2.A.1.1) family. Glucose transporter subfamily.</text>
</comment>
<keyword id="KW-0007">Acetylation</keyword>
<keyword id="KW-1003">Cell membrane</keyword>
<keyword id="KW-0325">Glycoprotein</keyword>
<keyword id="KW-0472">Membrane</keyword>
<keyword id="KW-0597">Phosphoprotein</keyword>
<keyword id="KW-1185">Reference proteome</keyword>
<keyword id="KW-0762">Sugar transport</keyword>
<keyword id="KW-0812">Transmembrane</keyword>
<keyword id="KW-1133">Transmembrane helix</keyword>
<keyword id="KW-0813">Transport</keyword>
<protein>
    <recommendedName>
        <fullName evidence="9">Solute carrier family 2, facilitated glucose transporter member 1</fullName>
    </recommendedName>
    <alternativeName>
        <fullName evidence="1">Glucose transporter type 1, erythrocyte/brain</fullName>
        <shortName evidence="1">GLUT-1</shortName>
    </alternativeName>
</protein>
<sequence length="492" mass="54132">MEPTSKKLTGRLMLAVGGAVLGSLQFGYNTGVINAPQKVIEEFYNQTWVQRYGEPIPPATLTTLWSLSVAIFSVGGMIGSFSVGLFVNRFGRRNSMLMMNLLAFVSAVLMGFSKLGKSFEMLILGRFIIGVYCGLTTGFVPMYVGEVSPTELRGALGTLHQLGIVVGILIAQVFGLDSIMGNQELWPLLLSVIFIPALLQCILLPFCPESPRFLLINRNEENRAKSVLKKLRGTADVTRDLQEMKEESRQMMREKKVTILELFRSAAYRQPILIAVVLQLSQQLSGINAVFYYSTSIFEKAGVQQPVYATIGSGIVNTAFTVVSLFVVERAGRRTLHLIGLAGMAGCAVLMTIALALLERLPWMSYLSIVAIFGFVAFFEVGPGPIPWFIVAELFSQGPRPAAIAVAGFSNWTSNFIVGMCFQYVEQLCGPYVFIIFTVLLVLFFIFTYFKVPETKGRTFDEIASGFRQGGASQSDKTPEELFHPLGADSQV</sequence>